<keyword id="KW-0007">Acetylation</keyword>
<keyword id="KW-0963">Cytoplasm</keyword>
<keyword id="KW-0324">Glycolysis</keyword>
<keyword id="KW-0379">Hydroxylation</keyword>
<keyword id="KW-0456">Lyase</keyword>
<keyword id="KW-0460">Magnesium</keyword>
<keyword id="KW-0479">Metal-binding</keyword>
<keyword id="KW-1185">Reference proteome</keyword>
<keyword id="KW-0964">Secreted</keyword>
<feature type="chain" id="PRO_1000115900" description="Enolase">
    <location>
        <begin position="1"/>
        <end position="433"/>
    </location>
</feature>
<feature type="active site" description="Proton donor" evidence="1">
    <location>
        <position position="209"/>
    </location>
</feature>
<feature type="active site" description="Proton acceptor" evidence="1">
    <location>
        <position position="343"/>
    </location>
</feature>
<feature type="binding site" evidence="1">
    <location>
        <position position="167"/>
    </location>
    <ligand>
        <name>(2R)-2-phosphoglycerate</name>
        <dbReference type="ChEBI" id="CHEBI:58289"/>
    </ligand>
</feature>
<feature type="binding site" evidence="1">
    <location>
        <position position="246"/>
    </location>
    <ligand>
        <name>Mg(2+)</name>
        <dbReference type="ChEBI" id="CHEBI:18420"/>
    </ligand>
</feature>
<feature type="binding site" evidence="1">
    <location>
        <position position="291"/>
    </location>
    <ligand>
        <name>Mg(2+)</name>
        <dbReference type="ChEBI" id="CHEBI:18420"/>
    </ligand>
</feature>
<feature type="binding site" evidence="1">
    <location>
        <position position="318"/>
    </location>
    <ligand>
        <name>Mg(2+)</name>
        <dbReference type="ChEBI" id="CHEBI:18420"/>
    </ligand>
</feature>
<feature type="binding site" evidence="1">
    <location>
        <position position="343"/>
    </location>
    <ligand>
        <name>(2R)-2-phosphoglycerate</name>
        <dbReference type="ChEBI" id="CHEBI:58289"/>
    </ligand>
</feature>
<feature type="binding site" evidence="1">
    <location>
        <position position="372"/>
    </location>
    <ligand>
        <name>(2R)-2-phosphoglycerate</name>
        <dbReference type="ChEBI" id="CHEBI:58289"/>
    </ligand>
</feature>
<feature type="binding site" evidence="1">
    <location>
        <position position="373"/>
    </location>
    <ligand>
        <name>(2R)-2-phosphoglycerate</name>
        <dbReference type="ChEBI" id="CHEBI:58289"/>
    </ligand>
</feature>
<feature type="binding site" evidence="1">
    <location>
        <position position="394"/>
    </location>
    <ligand>
        <name>(2R)-2-phosphoglycerate</name>
        <dbReference type="ChEBI" id="CHEBI:58289"/>
    </ligand>
</feature>
<feature type="modified residue" description="N6-acetyllysine" evidence="2">
    <location>
        <position position="326"/>
    </location>
</feature>
<feature type="modified residue" description="N6-(2-hydroxyisobutyryl)lysine" evidence="2">
    <location>
        <position position="343"/>
    </location>
</feature>
<feature type="mutagenesis site" description="Decreased enolase activity. Strongly reduced enolase activity; when associated with T-343." evidence="2">
    <original>K</original>
    <variation>Q</variation>
    <location>
        <position position="326"/>
    </location>
</feature>
<feature type="mutagenesis site" description="Decreased enolase activity. Strongly reduced enolase activity; when associated with Q-326." evidence="2">
    <original>K</original>
    <variation>T</variation>
    <location>
        <position position="343"/>
    </location>
</feature>
<proteinExistence type="evidence at protein level"/>
<protein>
    <recommendedName>
        <fullName evidence="1">Enolase</fullName>
        <ecNumber evidence="1 2">4.2.1.11</ecNumber>
    </recommendedName>
    <alternativeName>
        <fullName evidence="1">2-phospho-D-glycerate hydro-lyase</fullName>
    </alternativeName>
    <alternativeName>
        <fullName evidence="1">2-phosphoglycerate dehydratase</fullName>
    </alternativeName>
</protein>
<accession>B4EUF7</accession>
<name>ENO_PROMH</name>
<reference key="1">
    <citation type="journal article" date="2008" name="J. Bacteriol.">
        <title>Complete genome sequence of uropathogenic Proteus mirabilis, a master of both adherence and motility.</title>
        <authorList>
            <person name="Pearson M.M."/>
            <person name="Sebaihia M."/>
            <person name="Churcher C."/>
            <person name="Quail M.A."/>
            <person name="Seshasayee A.S."/>
            <person name="Luscombe N.M."/>
            <person name="Abdellah Z."/>
            <person name="Arrosmith C."/>
            <person name="Atkin B."/>
            <person name="Chillingworth T."/>
            <person name="Hauser H."/>
            <person name="Jagels K."/>
            <person name="Moule S."/>
            <person name="Mungall K."/>
            <person name="Norbertczak H."/>
            <person name="Rabbinowitsch E."/>
            <person name="Walker D."/>
            <person name="Whithead S."/>
            <person name="Thomson N.R."/>
            <person name="Rather P.N."/>
            <person name="Parkhill J."/>
            <person name="Mobley H.L.T."/>
        </authorList>
    </citation>
    <scope>NUCLEOTIDE SEQUENCE [LARGE SCALE GENOMIC DNA]</scope>
    <source>
        <strain>HI4320</strain>
    </source>
</reference>
<reference key="2">
    <citation type="journal article" date="2019" name="Sci. Adv.">
        <title>Protein lysine de-2-hydroxyisobutyrylation by CobB in prokaryotes.</title>
        <authorList>
            <person name="Dong H."/>
            <person name="Zhai G."/>
            <person name="Chen C."/>
            <person name="Bai X."/>
            <person name="Tian S."/>
            <person name="Hu D."/>
            <person name="Fan E."/>
            <person name="Zhang K."/>
        </authorList>
    </citation>
    <scope>FUNCTION</scope>
    <scope>CATALYTIC ACTIVITY</scope>
    <scope>ACETYLATION AT LYS-326</scope>
    <scope>HYDROXYBUTYRYLATION AT LYS-343</scope>
    <scope>MUTAGENESIS OF LYS-326 AND LYS-343</scope>
    <source>
        <strain>ATCC 29906</strain>
    </source>
</reference>
<dbReference type="EC" id="4.2.1.11" evidence="1 2"/>
<dbReference type="EMBL" id="AM942759">
    <property type="protein sequence ID" value="CAR40635.1"/>
    <property type="molecule type" value="Genomic_DNA"/>
</dbReference>
<dbReference type="RefSeq" id="WP_012367511.1">
    <property type="nucleotide sequence ID" value="NC_010554.1"/>
</dbReference>
<dbReference type="SMR" id="B4EUF7"/>
<dbReference type="iPTMnet" id="B4EUF7"/>
<dbReference type="EnsemblBacteria" id="CAR40635">
    <property type="protein sequence ID" value="CAR40635"/>
    <property type="gene ID" value="PMI0221"/>
</dbReference>
<dbReference type="GeneID" id="6801527"/>
<dbReference type="KEGG" id="pmr:PMI0221"/>
<dbReference type="PATRIC" id="fig|529507.6.peg.213"/>
<dbReference type="eggNOG" id="COG0148">
    <property type="taxonomic scope" value="Bacteria"/>
</dbReference>
<dbReference type="HOGENOM" id="CLU_031223_2_1_6"/>
<dbReference type="UniPathway" id="UPA00109">
    <property type="reaction ID" value="UER00187"/>
</dbReference>
<dbReference type="Proteomes" id="UP000008319">
    <property type="component" value="Chromosome"/>
</dbReference>
<dbReference type="GO" id="GO:0009986">
    <property type="term" value="C:cell surface"/>
    <property type="evidence" value="ECO:0007669"/>
    <property type="project" value="UniProtKB-SubCell"/>
</dbReference>
<dbReference type="GO" id="GO:0005576">
    <property type="term" value="C:extracellular region"/>
    <property type="evidence" value="ECO:0007669"/>
    <property type="project" value="UniProtKB-SubCell"/>
</dbReference>
<dbReference type="GO" id="GO:0000015">
    <property type="term" value="C:phosphopyruvate hydratase complex"/>
    <property type="evidence" value="ECO:0007669"/>
    <property type="project" value="InterPro"/>
</dbReference>
<dbReference type="GO" id="GO:0000287">
    <property type="term" value="F:magnesium ion binding"/>
    <property type="evidence" value="ECO:0007669"/>
    <property type="project" value="UniProtKB-UniRule"/>
</dbReference>
<dbReference type="GO" id="GO:0004634">
    <property type="term" value="F:phosphopyruvate hydratase activity"/>
    <property type="evidence" value="ECO:0007669"/>
    <property type="project" value="UniProtKB-UniRule"/>
</dbReference>
<dbReference type="GO" id="GO:0006096">
    <property type="term" value="P:glycolytic process"/>
    <property type="evidence" value="ECO:0007669"/>
    <property type="project" value="UniProtKB-UniRule"/>
</dbReference>
<dbReference type="CDD" id="cd03313">
    <property type="entry name" value="enolase"/>
    <property type="match status" value="1"/>
</dbReference>
<dbReference type="FunFam" id="3.20.20.120:FF:000001">
    <property type="entry name" value="Enolase"/>
    <property type="match status" value="1"/>
</dbReference>
<dbReference type="FunFam" id="3.30.390.10:FF:000001">
    <property type="entry name" value="Enolase"/>
    <property type="match status" value="1"/>
</dbReference>
<dbReference type="Gene3D" id="3.20.20.120">
    <property type="entry name" value="Enolase-like C-terminal domain"/>
    <property type="match status" value="1"/>
</dbReference>
<dbReference type="Gene3D" id="3.30.390.10">
    <property type="entry name" value="Enolase-like, N-terminal domain"/>
    <property type="match status" value="1"/>
</dbReference>
<dbReference type="HAMAP" id="MF_00318">
    <property type="entry name" value="Enolase"/>
    <property type="match status" value="1"/>
</dbReference>
<dbReference type="InterPro" id="IPR000941">
    <property type="entry name" value="Enolase"/>
</dbReference>
<dbReference type="InterPro" id="IPR036849">
    <property type="entry name" value="Enolase-like_C_sf"/>
</dbReference>
<dbReference type="InterPro" id="IPR029017">
    <property type="entry name" value="Enolase-like_N"/>
</dbReference>
<dbReference type="InterPro" id="IPR020810">
    <property type="entry name" value="Enolase_C"/>
</dbReference>
<dbReference type="InterPro" id="IPR020809">
    <property type="entry name" value="Enolase_CS"/>
</dbReference>
<dbReference type="InterPro" id="IPR020811">
    <property type="entry name" value="Enolase_N"/>
</dbReference>
<dbReference type="NCBIfam" id="TIGR01060">
    <property type="entry name" value="eno"/>
    <property type="match status" value="1"/>
</dbReference>
<dbReference type="PANTHER" id="PTHR11902">
    <property type="entry name" value="ENOLASE"/>
    <property type="match status" value="1"/>
</dbReference>
<dbReference type="PANTHER" id="PTHR11902:SF1">
    <property type="entry name" value="ENOLASE"/>
    <property type="match status" value="1"/>
</dbReference>
<dbReference type="Pfam" id="PF00113">
    <property type="entry name" value="Enolase_C"/>
    <property type="match status" value="1"/>
</dbReference>
<dbReference type="Pfam" id="PF03952">
    <property type="entry name" value="Enolase_N"/>
    <property type="match status" value="1"/>
</dbReference>
<dbReference type="PIRSF" id="PIRSF001400">
    <property type="entry name" value="Enolase"/>
    <property type="match status" value="1"/>
</dbReference>
<dbReference type="PRINTS" id="PR00148">
    <property type="entry name" value="ENOLASE"/>
</dbReference>
<dbReference type="SFLD" id="SFLDS00001">
    <property type="entry name" value="Enolase"/>
    <property type="match status" value="1"/>
</dbReference>
<dbReference type="SFLD" id="SFLDF00002">
    <property type="entry name" value="enolase"/>
    <property type="match status" value="1"/>
</dbReference>
<dbReference type="SMART" id="SM01192">
    <property type="entry name" value="Enolase_C"/>
    <property type="match status" value="1"/>
</dbReference>
<dbReference type="SMART" id="SM01193">
    <property type="entry name" value="Enolase_N"/>
    <property type="match status" value="1"/>
</dbReference>
<dbReference type="SUPFAM" id="SSF51604">
    <property type="entry name" value="Enolase C-terminal domain-like"/>
    <property type="match status" value="1"/>
</dbReference>
<dbReference type="SUPFAM" id="SSF54826">
    <property type="entry name" value="Enolase N-terminal domain-like"/>
    <property type="match status" value="1"/>
</dbReference>
<dbReference type="PROSITE" id="PS00164">
    <property type="entry name" value="ENOLASE"/>
    <property type="match status" value="1"/>
</dbReference>
<sequence>MSKIVKVLGREIIDSRGNPTVEAEVHLEGGFVGMAAAPSGASTGSREALELRDGDKSRFLGKGVLKAVEAVNGPIAKALLGQDAKDQANIDKIMIDLDGTENKSNFGANAILAVSLANAKAAAAAKGMPLYEHISDLNGTHGQYSMPLPMMNIINGGEHADNNVDIQEFMIQPVGAPTLKEAVRMGSEIFHHLAKVLKAKGMNTAVGDEGGYAPNLESNAAALAAIKEAVEAAGYVLGKDVTLAMDCAASEFYNNETGNYELKGEGKTFTSQEFTHYLEELTKQYLIVSIEDGLNESDWDGFAYQTKVLGDKIQLVGDDLFVTNTKILKEGIDKGIANSILIKFNQIGSLTETLAAIKMAKDAGYTAIISHRSGETEDATIADLAVGTAAGQIKTGSMSRSDRVAKYNQLIRIEEALGSKAPFNGLKEVKGQA</sequence>
<organism>
    <name type="scientific">Proteus mirabilis (strain HI4320)</name>
    <dbReference type="NCBI Taxonomy" id="529507"/>
    <lineage>
        <taxon>Bacteria</taxon>
        <taxon>Pseudomonadati</taxon>
        <taxon>Pseudomonadota</taxon>
        <taxon>Gammaproteobacteria</taxon>
        <taxon>Enterobacterales</taxon>
        <taxon>Morganellaceae</taxon>
        <taxon>Proteus</taxon>
    </lineage>
</organism>
<comment type="function">
    <text evidence="1 2">Catalyzes the reversible conversion of 2-phosphoglycerate (2-PG) into phosphoenolpyruvate (PEP) (PubMed:31328167). It is essential for the degradation of carbohydrates via glycolysis.</text>
</comment>
<comment type="catalytic activity">
    <reaction evidence="1 2">
        <text>(2R)-2-phosphoglycerate = phosphoenolpyruvate + H2O</text>
        <dbReference type="Rhea" id="RHEA:10164"/>
        <dbReference type="ChEBI" id="CHEBI:15377"/>
        <dbReference type="ChEBI" id="CHEBI:58289"/>
        <dbReference type="ChEBI" id="CHEBI:58702"/>
        <dbReference type="EC" id="4.2.1.11"/>
    </reaction>
    <physiologicalReaction direction="left-to-right" evidence="2">
        <dbReference type="Rhea" id="RHEA:10165"/>
    </physiologicalReaction>
</comment>
<comment type="cofactor">
    <cofactor evidence="1">
        <name>Mg(2+)</name>
        <dbReference type="ChEBI" id="CHEBI:18420"/>
    </cofactor>
    <text evidence="1">Binds a second Mg(2+) ion via substrate during catalysis.</text>
</comment>
<comment type="pathway">
    <text evidence="1">Carbohydrate degradation; glycolysis; pyruvate from D-glyceraldehyde 3-phosphate: step 4/5.</text>
</comment>
<comment type="subunit">
    <text evidence="1">Component of the RNA degradosome, a multiprotein complex involved in RNA processing and mRNA degradation.</text>
</comment>
<comment type="subcellular location">
    <subcellularLocation>
        <location evidence="1">Cytoplasm</location>
    </subcellularLocation>
    <subcellularLocation>
        <location evidence="1">Secreted</location>
    </subcellularLocation>
    <subcellularLocation>
        <location evidence="1">Cell surface</location>
    </subcellularLocation>
    <text evidence="1">Fractions of enolase are present in both the cytoplasm and on the cell surface.</text>
</comment>
<comment type="PTM">
    <text evidence="2">Acetylated and 2-hydroxyisobutyrylated at Lys-326 and Lys-343, respectively, reducing the enolase activity (PubMed:31328167). Deacetylated and de-2-hydroxyisobutyrylated by NpdA/CobB, increasing the enolase activity (PubMed:31328167).</text>
</comment>
<comment type="similarity">
    <text evidence="1">Belongs to the enolase family.</text>
</comment>
<gene>
    <name evidence="1" type="primary">eno</name>
    <name type="ordered locus">PMI0221</name>
</gene>
<evidence type="ECO:0000255" key="1">
    <source>
        <dbReference type="HAMAP-Rule" id="MF_00318"/>
    </source>
</evidence>
<evidence type="ECO:0000269" key="2">
    <source>
    </source>
</evidence>